<sequence length="8" mass="948">QVNFTPGW</sequence>
<reference evidence="5" key="1">
    <citation type="journal article" date="2012" name="Syst. Biol.">
        <title>Peptidomics-based phylogeny and biogeography of Mantophasmatodea (Hexapoda).</title>
        <authorList>
            <person name="Predel R."/>
            <person name="Neupert S."/>
            <person name="Huetteroth W."/>
            <person name="Kahnt J."/>
            <person name="Waidelich D."/>
            <person name="Roth S."/>
        </authorList>
    </citation>
    <scope>PROTEIN SEQUENCE</scope>
    <scope>PYROGLUTAMATE FORMATION AT GLN-1</scope>
    <scope>AMIDATION AT TRP-8</scope>
    <source>
        <tissue evidence="3">Corpora cardiaca</tissue>
    </source>
</reference>
<organism>
    <name type="scientific">Hemilobophasma montaguense</name>
    <name type="common">Gladiator</name>
    <name type="synonym">Heel-walker</name>
    <dbReference type="NCBI Taxonomy" id="253130"/>
    <lineage>
        <taxon>Eukaryota</taxon>
        <taxon>Metazoa</taxon>
        <taxon>Ecdysozoa</taxon>
        <taxon>Arthropoda</taxon>
        <taxon>Hexapoda</taxon>
        <taxon>Insecta</taxon>
        <taxon>Pterygota</taxon>
        <taxon>Neoptera</taxon>
        <taxon>Polyneoptera</taxon>
        <taxon>Mantophasmatodea</taxon>
        <taxon>Austrophasmatidae</taxon>
        <taxon>Hemilobophasma</taxon>
    </lineage>
</organism>
<comment type="function">
    <text evidence="1">This hormone, released from cells in the corpora cardiaca, causes release of diglycerides from the fat body and stimulation of muscles to use these diglycerides as an energy source during energy-demanding processes.</text>
</comment>
<comment type="subcellular location">
    <subcellularLocation>
        <location evidence="6">Secreted</location>
    </subcellularLocation>
</comment>
<comment type="similarity">
    <text evidence="2">Belongs to the AKH/HRTH/RPCH family.</text>
</comment>
<evidence type="ECO:0000250" key="1">
    <source>
        <dbReference type="UniProtKB" id="P55319"/>
    </source>
</evidence>
<evidence type="ECO:0000255" key="2"/>
<evidence type="ECO:0000269" key="3">
    <source>
    </source>
</evidence>
<evidence type="ECO:0000303" key="4">
    <source>
    </source>
</evidence>
<evidence type="ECO:0000305" key="5"/>
<evidence type="ECO:0000305" key="6">
    <source>
    </source>
</evidence>
<keyword id="KW-0027">Amidation</keyword>
<keyword id="KW-0903">Direct protein sequencing</keyword>
<keyword id="KW-0286">Flight</keyword>
<keyword id="KW-0372">Hormone</keyword>
<keyword id="KW-0527">Neuropeptide</keyword>
<keyword id="KW-0873">Pyrrolidone carboxylic acid</keyword>
<keyword id="KW-0964">Secreted</keyword>
<accession>B3A0D3</accession>
<name>AKH_HEMMO</name>
<dbReference type="GO" id="GO:0005576">
    <property type="term" value="C:extracellular region"/>
    <property type="evidence" value="ECO:0007669"/>
    <property type="project" value="UniProtKB-SubCell"/>
</dbReference>
<dbReference type="GO" id="GO:0005179">
    <property type="term" value="F:hormone activity"/>
    <property type="evidence" value="ECO:0007669"/>
    <property type="project" value="UniProtKB-KW"/>
</dbReference>
<dbReference type="GO" id="GO:0007629">
    <property type="term" value="P:flight behavior"/>
    <property type="evidence" value="ECO:0007669"/>
    <property type="project" value="UniProtKB-KW"/>
</dbReference>
<dbReference type="GO" id="GO:0007218">
    <property type="term" value="P:neuropeptide signaling pathway"/>
    <property type="evidence" value="ECO:0007669"/>
    <property type="project" value="UniProtKB-KW"/>
</dbReference>
<dbReference type="InterPro" id="IPR002047">
    <property type="entry name" value="Adipokinetic_hormone_CS"/>
</dbReference>
<dbReference type="PROSITE" id="PS00256">
    <property type="entry name" value="AKH"/>
    <property type="match status" value="1"/>
</dbReference>
<feature type="peptide" id="PRO_0000421653" description="Adipokinetic hormone" evidence="3">
    <location>
        <begin position="1"/>
        <end position="8"/>
    </location>
</feature>
<feature type="modified residue" description="Pyrrolidone carboxylic acid" evidence="3">
    <location>
        <position position="1"/>
    </location>
</feature>
<feature type="modified residue" description="Tryptophan amide" evidence="3">
    <location>
        <position position="8"/>
    </location>
</feature>
<proteinExistence type="evidence at protein level"/>
<protein>
    <recommendedName>
        <fullName evidence="4">Adipokinetic hormone</fullName>
        <shortName evidence="4">AKH</shortName>
    </recommendedName>
</protein>